<feature type="chain" id="PRO_0000390213" description="NADH-quinone oxidoreductase subunit K">
    <location>
        <begin position="1"/>
        <end position="112"/>
    </location>
</feature>
<feature type="transmembrane region" description="Helical" evidence="1">
    <location>
        <begin position="14"/>
        <end position="34"/>
    </location>
</feature>
<feature type="transmembrane region" description="Helical" evidence="1">
    <location>
        <begin position="39"/>
        <end position="59"/>
    </location>
</feature>
<feature type="transmembrane region" description="Helical" evidence="1">
    <location>
        <begin position="76"/>
        <end position="96"/>
    </location>
</feature>
<reference key="1">
    <citation type="submission" date="2006-06" db="EMBL/GenBank/DDBJ databases">
        <title>Complete sequence of Rubrobacter xylanophilus DSM 9941.</title>
        <authorList>
            <consortium name="US DOE Joint Genome Institute"/>
            <person name="Copeland A."/>
            <person name="Lucas S."/>
            <person name="Lapidus A."/>
            <person name="Barry K."/>
            <person name="Detter J.C."/>
            <person name="Glavina del Rio T."/>
            <person name="Hammon N."/>
            <person name="Israni S."/>
            <person name="Dalin E."/>
            <person name="Tice H."/>
            <person name="Pitluck S."/>
            <person name="Munk A.C."/>
            <person name="Brettin T."/>
            <person name="Bruce D."/>
            <person name="Han C."/>
            <person name="Tapia R."/>
            <person name="Gilna P."/>
            <person name="Schmutz J."/>
            <person name="Larimer F."/>
            <person name="Land M."/>
            <person name="Hauser L."/>
            <person name="Kyrpides N."/>
            <person name="Lykidis A."/>
            <person name="da Costa M.S."/>
            <person name="Rainey F.A."/>
            <person name="Empadinhas N."/>
            <person name="Jolivet E."/>
            <person name="Battista J.R."/>
            <person name="Richardson P."/>
        </authorList>
    </citation>
    <scope>NUCLEOTIDE SEQUENCE [LARGE SCALE GENOMIC DNA]</scope>
    <source>
        <strain>DSM 9941 / JCM 11954 / NBRC 16129 / PRD-1</strain>
    </source>
</reference>
<name>NUOK_RUBXD</name>
<comment type="function">
    <text evidence="1">NDH-1 shuttles electrons from NADH, via FMN and iron-sulfur (Fe-S) centers, to quinones in the respiratory chain. The immediate electron acceptor for the enzyme in this species is believed to be a menaquinone. Couples the redox reaction to proton translocation (for every two electrons transferred, four hydrogen ions are translocated across the cytoplasmic membrane), and thus conserves the redox energy in a proton gradient.</text>
</comment>
<comment type="catalytic activity">
    <reaction evidence="1">
        <text>a quinone + NADH + 5 H(+)(in) = a quinol + NAD(+) + 4 H(+)(out)</text>
        <dbReference type="Rhea" id="RHEA:57888"/>
        <dbReference type="ChEBI" id="CHEBI:15378"/>
        <dbReference type="ChEBI" id="CHEBI:24646"/>
        <dbReference type="ChEBI" id="CHEBI:57540"/>
        <dbReference type="ChEBI" id="CHEBI:57945"/>
        <dbReference type="ChEBI" id="CHEBI:132124"/>
    </reaction>
</comment>
<comment type="subunit">
    <text evidence="1">NDH-1 is composed of 14 different subunits. Subunits NuoA, H, J, K, L, M, N constitute the membrane sector of the complex.</text>
</comment>
<comment type="subcellular location">
    <subcellularLocation>
        <location evidence="1">Cell membrane</location>
        <topology evidence="1">Multi-pass membrane protein</topology>
    </subcellularLocation>
</comment>
<comment type="similarity">
    <text evidence="1">Belongs to the complex I subunit 4L family.</text>
</comment>
<proteinExistence type="inferred from homology"/>
<evidence type="ECO:0000255" key="1">
    <source>
        <dbReference type="HAMAP-Rule" id="MF_01456"/>
    </source>
</evidence>
<keyword id="KW-1003">Cell membrane</keyword>
<keyword id="KW-0472">Membrane</keyword>
<keyword id="KW-0520">NAD</keyword>
<keyword id="KW-0874">Quinone</keyword>
<keyword id="KW-1185">Reference proteome</keyword>
<keyword id="KW-1278">Translocase</keyword>
<keyword id="KW-0812">Transmembrane</keyword>
<keyword id="KW-1133">Transmembrane helix</keyword>
<keyword id="KW-0813">Transport</keyword>
<sequence>MQQLVEQLNAQIPLEGYLTVAAIMFAIGAWGALIRRNAVVVFMCVELMINAVNLTLVAFADFLPGAGGAGAGYTVLIIAIAAAEVAVGLAIVLAIFRTRRTVNIDEVDSLRG</sequence>
<dbReference type="EC" id="7.1.1.-" evidence="1"/>
<dbReference type="EMBL" id="CP000386">
    <property type="protein sequence ID" value="ABG04589.1"/>
    <property type="molecule type" value="Genomic_DNA"/>
</dbReference>
<dbReference type="RefSeq" id="WP_011564606.1">
    <property type="nucleotide sequence ID" value="NC_008148.1"/>
</dbReference>
<dbReference type="SMR" id="Q1AVI9"/>
<dbReference type="STRING" id="266117.Rxyl_1628"/>
<dbReference type="KEGG" id="rxy:Rxyl_1628"/>
<dbReference type="eggNOG" id="COG0713">
    <property type="taxonomic scope" value="Bacteria"/>
</dbReference>
<dbReference type="HOGENOM" id="CLU_144724_0_0_11"/>
<dbReference type="OrthoDB" id="9810120at2"/>
<dbReference type="PhylomeDB" id="Q1AVI9"/>
<dbReference type="Proteomes" id="UP000006637">
    <property type="component" value="Chromosome"/>
</dbReference>
<dbReference type="GO" id="GO:0030964">
    <property type="term" value="C:NADH dehydrogenase complex"/>
    <property type="evidence" value="ECO:0007669"/>
    <property type="project" value="TreeGrafter"/>
</dbReference>
<dbReference type="GO" id="GO:0005886">
    <property type="term" value="C:plasma membrane"/>
    <property type="evidence" value="ECO:0007669"/>
    <property type="project" value="UniProtKB-SubCell"/>
</dbReference>
<dbReference type="GO" id="GO:0050136">
    <property type="term" value="F:NADH:ubiquinone reductase (non-electrogenic) activity"/>
    <property type="evidence" value="ECO:0007669"/>
    <property type="project" value="UniProtKB-UniRule"/>
</dbReference>
<dbReference type="GO" id="GO:0048038">
    <property type="term" value="F:quinone binding"/>
    <property type="evidence" value="ECO:0007669"/>
    <property type="project" value="UniProtKB-KW"/>
</dbReference>
<dbReference type="GO" id="GO:0042773">
    <property type="term" value="P:ATP synthesis coupled electron transport"/>
    <property type="evidence" value="ECO:0007669"/>
    <property type="project" value="InterPro"/>
</dbReference>
<dbReference type="FunFam" id="1.10.287.3510:FF:000001">
    <property type="entry name" value="NADH-quinone oxidoreductase subunit K"/>
    <property type="match status" value="1"/>
</dbReference>
<dbReference type="Gene3D" id="1.10.287.3510">
    <property type="match status" value="1"/>
</dbReference>
<dbReference type="HAMAP" id="MF_01456">
    <property type="entry name" value="NDH1_NuoK"/>
    <property type="match status" value="1"/>
</dbReference>
<dbReference type="InterPro" id="IPR001133">
    <property type="entry name" value="NADH_UbQ_OxRdtase_chain4L/K"/>
</dbReference>
<dbReference type="InterPro" id="IPR039428">
    <property type="entry name" value="NUOK/Mnh_C1-like"/>
</dbReference>
<dbReference type="NCBIfam" id="NF004320">
    <property type="entry name" value="PRK05715.1-2"/>
    <property type="match status" value="1"/>
</dbReference>
<dbReference type="PANTHER" id="PTHR11434:SF16">
    <property type="entry name" value="NADH-UBIQUINONE OXIDOREDUCTASE CHAIN 4L"/>
    <property type="match status" value="1"/>
</dbReference>
<dbReference type="PANTHER" id="PTHR11434">
    <property type="entry name" value="NADH-UBIQUINONE OXIDOREDUCTASE SUBUNIT ND4L"/>
    <property type="match status" value="1"/>
</dbReference>
<dbReference type="Pfam" id="PF00420">
    <property type="entry name" value="Oxidored_q2"/>
    <property type="match status" value="1"/>
</dbReference>
<protein>
    <recommendedName>
        <fullName evidence="1">NADH-quinone oxidoreductase subunit K</fullName>
        <ecNumber evidence="1">7.1.1.-</ecNumber>
    </recommendedName>
    <alternativeName>
        <fullName evidence="1">NADH dehydrogenase I subunit K</fullName>
    </alternativeName>
    <alternativeName>
        <fullName evidence="1">NDH-1 subunit K</fullName>
    </alternativeName>
</protein>
<accession>Q1AVI9</accession>
<gene>
    <name evidence="1" type="primary">nuoK</name>
    <name type="ordered locus">Rxyl_1628</name>
</gene>
<organism>
    <name type="scientific">Rubrobacter xylanophilus (strain DSM 9941 / JCM 11954 / NBRC 16129 / PRD-1)</name>
    <dbReference type="NCBI Taxonomy" id="266117"/>
    <lineage>
        <taxon>Bacteria</taxon>
        <taxon>Bacillati</taxon>
        <taxon>Actinomycetota</taxon>
        <taxon>Rubrobacteria</taxon>
        <taxon>Rubrobacterales</taxon>
        <taxon>Rubrobacteraceae</taxon>
        <taxon>Rubrobacter</taxon>
    </lineage>
</organism>